<dbReference type="EC" id="2.3.1.199" evidence="6"/>
<dbReference type="EMBL" id="AC025808">
    <property type="protein sequence ID" value="AAF79428.1"/>
    <property type="molecule type" value="Genomic_DNA"/>
</dbReference>
<dbReference type="EMBL" id="CP002684">
    <property type="protein sequence ID" value="AEE29852.1"/>
    <property type="molecule type" value="Genomic_DNA"/>
</dbReference>
<dbReference type="EMBL" id="BT033044">
    <property type="protein sequence ID" value="ACE79746.1"/>
    <property type="molecule type" value="mRNA"/>
</dbReference>
<dbReference type="PIR" id="F86327">
    <property type="entry name" value="F86327"/>
</dbReference>
<dbReference type="RefSeq" id="NP_173376.1">
    <property type="nucleotide sequence ID" value="NM_101800.3"/>
</dbReference>
<dbReference type="SMR" id="Q9LN49"/>
<dbReference type="FunCoup" id="Q9LN49">
    <property type="interactions" value="213"/>
</dbReference>
<dbReference type="STRING" id="3702.Q9LN49"/>
<dbReference type="PaxDb" id="3702-AT1G19440.1"/>
<dbReference type="ProteomicsDB" id="247272"/>
<dbReference type="EnsemblPlants" id="AT1G19440.1">
    <property type="protein sequence ID" value="AT1G19440.1"/>
    <property type="gene ID" value="AT1G19440"/>
</dbReference>
<dbReference type="GeneID" id="838528"/>
<dbReference type="Gramene" id="AT1G19440.1">
    <property type="protein sequence ID" value="AT1G19440.1"/>
    <property type="gene ID" value="AT1G19440"/>
</dbReference>
<dbReference type="KEGG" id="ath:AT1G19440"/>
<dbReference type="Araport" id="AT1G19440"/>
<dbReference type="TAIR" id="AT1G19440">
    <property type="gene designation" value="KCS4"/>
</dbReference>
<dbReference type="eggNOG" id="ENOG502QPKZ">
    <property type="taxonomic scope" value="Eukaryota"/>
</dbReference>
<dbReference type="HOGENOM" id="CLU_013238_2_1_1"/>
<dbReference type="InParanoid" id="Q9LN49"/>
<dbReference type="OMA" id="HHSKLCG"/>
<dbReference type="OrthoDB" id="329835at2759"/>
<dbReference type="PhylomeDB" id="Q9LN49"/>
<dbReference type="BioCyc" id="ARA:AT1G19440-MONOMER"/>
<dbReference type="UniPathway" id="UPA00094"/>
<dbReference type="PRO" id="PR:Q9LN49"/>
<dbReference type="Proteomes" id="UP000006548">
    <property type="component" value="Chromosome 1"/>
</dbReference>
<dbReference type="ExpressionAtlas" id="Q9LN49">
    <property type="expression patterns" value="baseline and differential"/>
</dbReference>
<dbReference type="GO" id="GO:0016020">
    <property type="term" value="C:membrane"/>
    <property type="evidence" value="ECO:0007669"/>
    <property type="project" value="UniProtKB-SubCell"/>
</dbReference>
<dbReference type="GO" id="GO:0009922">
    <property type="term" value="F:fatty acid elongase activity"/>
    <property type="evidence" value="ECO:0007669"/>
    <property type="project" value="UniProtKB-EC"/>
</dbReference>
<dbReference type="GO" id="GO:0006633">
    <property type="term" value="P:fatty acid biosynthetic process"/>
    <property type="evidence" value="ECO:0007669"/>
    <property type="project" value="UniProtKB-UniPathway"/>
</dbReference>
<dbReference type="CDD" id="cd00831">
    <property type="entry name" value="CHS_like"/>
    <property type="match status" value="1"/>
</dbReference>
<dbReference type="FunFam" id="3.40.47.10:FF:000028">
    <property type="entry name" value="3-ketoacyl-CoA synthase"/>
    <property type="match status" value="1"/>
</dbReference>
<dbReference type="Gene3D" id="3.40.47.10">
    <property type="match status" value="1"/>
</dbReference>
<dbReference type="InterPro" id="IPR012392">
    <property type="entry name" value="3-ktacl-CoA_syn"/>
</dbReference>
<dbReference type="InterPro" id="IPR013747">
    <property type="entry name" value="ACP_syn_III_C"/>
</dbReference>
<dbReference type="InterPro" id="IPR013601">
    <property type="entry name" value="FAE1_typ3_polyketide_synth"/>
</dbReference>
<dbReference type="InterPro" id="IPR016039">
    <property type="entry name" value="Thiolase-like"/>
</dbReference>
<dbReference type="PANTHER" id="PTHR31561">
    <property type="entry name" value="3-KETOACYL-COA SYNTHASE"/>
    <property type="match status" value="1"/>
</dbReference>
<dbReference type="Pfam" id="PF08541">
    <property type="entry name" value="ACP_syn_III_C"/>
    <property type="match status" value="1"/>
</dbReference>
<dbReference type="Pfam" id="PF08392">
    <property type="entry name" value="FAE1_CUT1_RppA"/>
    <property type="match status" value="1"/>
</dbReference>
<dbReference type="PIRSF" id="PIRSF036417">
    <property type="entry name" value="3-ktacl-CoA_syn"/>
    <property type="match status" value="1"/>
</dbReference>
<dbReference type="SUPFAM" id="SSF53901">
    <property type="entry name" value="Thiolase-like"/>
    <property type="match status" value="2"/>
</dbReference>
<name>KCS4_ARATH</name>
<comment type="catalytic activity">
    <reaction evidence="6">
        <text>a very-long-chain acyl-CoA + malonyl-CoA + H(+) = a very-long-chain 3-oxoacyl-CoA + CO2 + CoA</text>
        <dbReference type="Rhea" id="RHEA:32727"/>
        <dbReference type="ChEBI" id="CHEBI:15378"/>
        <dbReference type="ChEBI" id="CHEBI:16526"/>
        <dbReference type="ChEBI" id="CHEBI:57287"/>
        <dbReference type="ChEBI" id="CHEBI:57384"/>
        <dbReference type="ChEBI" id="CHEBI:90725"/>
        <dbReference type="ChEBI" id="CHEBI:90736"/>
        <dbReference type="EC" id="2.3.1.199"/>
    </reaction>
</comment>
<comment type="pathway">
    <text>Lipid metabolism; fatty acid biosynthesis.</text>
</comment>
<comment type="subcellular location">
    <subcellularLocation>
        <location evidence="2">Membrane</location>
        <topology evidence="2">Multi-pass membrane protein</topology>
    </subcellularLocation>
</comment>
<comment type="tissue specificity">
    <text evidence="4">Expressed at low levels in siliques, flowers, leaves and stems.</text>
</comment>
<comment type="induction">
    <text evidence="3">Repressed by herbicides such as flufenacet and benfuresate.</text>
</comment>
<comment type="similarity">
    <text evidence="6">Belongs to the thiolase-like superfamily. Chalcone/stilbene synthases family.</text>
</comment>
<proteinExistence type="evidence at transcript level"/>
<organism>
    <name type="scientific">Arabidopsis thaliana</name>
    <name type="common">Mouse-ear cress</name>
    <dbReference type="NCBI Taxonomy" id="3702"/>
    <lineage>
        <taxon>Eukaryota</taxon>
        <taxon>Viridiplantae</taxon>
        <taxon>Streptophyta</taxon>
        <taxon>Embryophyta</taxon>
        <taxon>Tracheophyta</taxon>
        <taxon>Spermatophyta</taxon>
        <taxon>Magnoliopsida</taxon>
        <taxon>eudicotyledons</taxon>
        <taxon>Gunneridae</taxon>
        <taxon>Pentapetalae</taxon>
        <taxon>rosids</taxon>
        <taxon>malvids</taxon>
        <taxon>Brassicales</taxon>
        <taxon>Brassicaceae</taxon>
        <taxon>Camelineae</taxon>
        <taxon>Arabidopsis</taxon>
    </lineage>
</organism>
<gene>
    <name evidence="5" type="primary">KCS4</name>
    <name evidence="7" type="ordered locus">At1g19440</name>
    <name evidence="8" type="ORF">F18O14.21</name>
</gene>
<sequence>MDGAGESRLGGDGGGDGSVGVQIRQTRMLPDFLQSVNLKYVKLGYHYLISNLLTLCLFPLAVVISVEASQMNPDDLKQLWIHLQYNLVSIIICSAILVFGLTVYVMTRPRPVYLVDFSCYLPPDHLKAPYARFMEHSRLTGDFDDSALEFQRKILERSGLGEDTYVPEAMHYVPPRISMAAAREEAEQVMFGALDNLFANTNVKPKDIGILVVNCSLFNPTPSLSAMIVNKYKLRGNIRSYNLGGMGCSAGVIAVDLAKDMLLVHRNTYAVVVSTENITQNWYFGNKKSMLIPNCLFRVGGSAVLLSNKSRDKRRSKYRLVHVVRTHRGADDKAFRCVYQEQDDTGRTGVSLSKDLMAIAGETLKTNITTLGPLVLPISEQILFFMTLVVKKLFNGKVKPYIPDFKLAFEHFCIHAGGRAVIDELEKNLQLSPVHVEASRMTLHRFGNTSSSSIWYELAYIEAKGRMRRGNRVWQIAFGSGFKCNSAIWEALRHVKPSNNSPWEDCIDKYPVTLSY</sequence>
<reference key="1">
    <citation type="journal article" date="2000" name="Nature">
        <title>Sequence and analysis of chromosome 1 of the plant Arabidopsis thaliana.</title>
        <authorList>
            <person name="Theologis A."/>
            <person name="Ecker J.R."/>
            <person name="Palm C.J."/>
            <person name="Federspiel N.A."/>
            <person name="Kaul S."/>
            <person name="White O."/>
            <person name="Alonso J."/>
            <person name="Altafi H."/>
            <person name="Araujo R."/>
            <person name="Bowman C.L."/>
            <person name="Brooks S.Y."/>
            <person name="Buehler E."/>
            <person name="Chan A."/>
            <person name="Chao Q."/>
            <person name="Chen H."/>
            <person name="Cheuk R.F."/>
            <person name="Chin C.W."/>
            <person name="Chung M.K."/>
            <person name="Conn L."/>
            <person name="Conway A.B."/>
            <person name="Conway A.R."/>
            <person name="Creasy T.H."/>
            <person name="Dewar K."/>
            <person name="Dunn P."/>
            <person name="Etgu P."/>
            <person name="Feldblyum T.V."/>
            <person name="Feng J.-D."/>
            <person name="Fong B."/>
            <person name="Fujii C.Y."/>
            <person name="Gill J.E."/>
            <person name="Goldsmith A.D."/>
            <person name="Haas B."/>
            <person name="Hansen N.F."/>
            <person name="Hughes B."/>
            <person name="Huizar L."/>
            <person name="Hunter J.L."/>
            <person name="Jenkins J."/>
            <person name="Johnson-Hopson C."/>
            <person name="Khan S."/>
            <person name="Khaykin E."/>
            <person name="Kim C.J."/>
            <person name="Koo H.L."/>
            <person name="Kremenetskaia I."/>
            <person name="Kurtz D.B."/>
            <person name="Kwan A."/>
            <person name="Lam B."/>
            <person name="Langin-Hooper S."/>
            <person name="Lee A."/>
            <person name="Lee J.M."/>
            <person name="Lenz C.A."/>
            <person name="Li J.H."/>
            <person name="Li Y.-P."/>
            <person name="Lin X."/>
            <person name="Liu S.X."/>
            <person name="Liu Z.A."/>
            <person name="Luros J.S."/>
            <person name="Maiti R."/>
            <person name="Marziali A."/>
            <person name="Militscher J."/>
            <person name="Miranda M."/>
            <person name="Nguyen M."/>
            <person name="Nierman W.C."/>
            <person name="Osborne B.I."/>
            <person name="Pai G."/>
            <person name="Peterson J."/>
            <person name="Pham P.K."/>
            <person name="Rizzo M."/>
            <person name="Rooney T."/>
            <person name="Rowley D."/>
            <person name="Sakano H."/>
            <person name="Salzberg S.L."/>
            <person name="Schwartz J.R."/>
            <person name="Shinn P."/>
            <person name="Southwick A.M."/>
            <person name="Sun H."/>
            <person name="Tallon L.J."/>
            <person name="Tambunga G."/>
            <person name="Toriumi M.J."/>
            <person name="Town C.D."/>
            <person name="Utterback T."/>
            <person name="Van Aken S."/>
            <person name="Vaysberg M."/>
            <person name="Vysotskaia V.S."/>
            <person name="Walker M."/>
            <person name="Wu D."/>
            <person name="Yu G."/>
            <person name="Fraser C.M."/>
            <person name="Venter J.C."/>
            <person name="Davis R.W."/>
        </authorList>
    </citation>
    <scope>NUCLEOTIDE SEQUENCE [LARGE SCALE GENOMIC DNA]</scope>
    <source>
        <strain>cv. Columbia</strain>
    </source>
</reference>
<reference key="2">
    <citation type="journal article" date="2017" name="Plant J.">
        <title>Araport11: a complete reannotation of the Arabidopsis thaliana reference genome.</title>
        <authorList>
            <person name="Cheng C.Y."/>
            <person name="Krishnakumar V."/>
            <person name="Chan A.P."/>
            <person name="Thibaud-Nissen F."/>
            <person name="Schobel S."/>
            <person name="Town C.D."/>
        </authorList>
    </citation>
    <scope>GENOME REANNOTATION</scope>
    <source>
        <strain>cv. Columbia</strain>
    </source>
</reference>
<reference key="3">
    <citation type="submission" date="2008-06" db="EMBL/GenBank/DDBJ databases">
        <title>Arabidopsis ORF clones.</title>
        <authorList>
            <person name="De Los Reyes C."/>
            <person name="Quan R."/>
            <person name="Chen H."/>
            <person name="Bautista V.R."/>
            <person name="Kim C.J."/>
            <person name="Ecker J.R."/>
        </authorList>
    </citation>
    <scope>NUCLEOTIDE SEQUENCE [LARGE SCALE MRNA]</scope>
    <source>
        <strain>cv. Columbia</strain>
    </source>
</reference>
<reference key="4">
    <citation type="journal article" date="2003" name="Pest Manag. Sci.">
        <title>Flufenacet herbicide treatment phenocopies the fiddlehead mutant in Arabidopsis thaliana.</title>
        <authorList>
            <person name="Lechelt-Kunze C."/>
            <person name="Meissner R.C."/>
            <person name="Drewes M."/>
            <person name="Tietjen K."/>
        </authorList>
    </citation>
    <scope>INDUCTION</scope>
    <scope>GENE FAMILY</scope>
</reference>
<reference key="5">
    <citation type="journal article" date="2008" name="Plant Mol. Biol.">
        <title>The VLCFA elongase gene family in Arabidopsis thaliana: phylogenetic analysis, 3D modelling and expression profiling.</title>
        <authorList>
            <person name="Joubes J."/>
            <person name="Raffaele S."/>
            <person name="Bourdenx B."/>
            <person name="Garcia C."/>
            <person name="Laroche-Traineau J."/>
            <person name="Moreau P."/>
            <person name="Domergue F."/>
            <person name="Lessire R."/>
        </authorList>
    </citation>
    <scope>GENE FAMILY</scope>
    <scope>NOMENCLATURE</scope>
    <scope>3D-STRUCTURE MODELING</scope>
    <scope>TISSUE SPECIFICITY</scope>
</reference>
<feature type="chain" id="PRO_0000249096" description="3-ketoacyl-CoA synthase 4">
    <location>
        <begin position="1"/>
        <end position="516"/>
    </location>
</feature>
<feature type="transmembrane region" description="Helical" evidence="2">
    <location>
        <begin position="48"/>
        <end position="68"/>
    </location>
</feature>
<feature type="transmembrane region" description="Helical" evidence="2">
    <location>
        <begin position="87"/>
        <end position="107"/>
    </location>
</feature>
<feature type="domain" description="FAE" evidence="2">
    <location>
        <begin position="104"/>
        <end position="393"/>
    </location>
</feature>
<feature type="active site" evidence="1">
    <location>
        <position position="248"/>
    </location>
</feature>
<feature type="active site" evidence="1">
    <location>
        <position position="327"/>
    </location>
</feature>
<feature type="active site" evidence="1">
    <location>
        <position position="411"/>
    </location>
</feature>
<feature type="active site" evidence="1">
    <location>
        <position position="415"/>
    </location>
</feature>
<feature type="active site" evidence="1">
    <location>
        <position position="444"/>
    </location>
</feature>
<feature type="active site" evidence="1">
    <location>
        <position position="448"/>
    </location>
</feature>
<accession>Q9LN49</accession>
<accession>B3LF56</accession>
<keyword id="KW-0012">Acyltransferase</keyword>
<keyword id="KW-0472">Membrane</keyword>
<keyword id="KW-1185">Reference proteome</keyword>
<keyword id="KW-0808">Transferase</keyword>
<keyword id="KW-0812">Transmembrane</keyword>
<keyword id="KW-1133">Transmembrane helix</keyword>
<evidence type="ECO:0000250" key="1">
    <source>
        <dbReference type="UniProtKB" id="Q38860"/>
    </source>
</evidence>
<evidence type="ECO:0000255" key="2"/>
<evidence type="ECO:0000269" key="3">
    <source>
    </source>
</evidence>
<evidence type="ECO:0000269" key="4">
    <source>
    </source>
</evidence>
<evidence type="ECO:0000303" key="5">
    <source>
    </source>
</evidence>
<evidence type="ECO:0000305" key="6"/>
<evidence type="ECO:0000312" key="7">
    <source>
        <dbReference type="Araport" id="AT1G19440"/>
    </source>
</evidence>
<evidence type="ECO:0000312" key="8">
    <source>
        <dbReference type="EMBL" id="AAF79428.1"/>
    </source>
</evidence>
<protein>
    <recommendedName>
        <fullName evidence="5">3-ketoacyl-CoA synthase 4</fullName>
        <shortName evidence="5">KCS-4</shortName>
        <ecNumber evidence="6">2.3.1.199</ecNumber>
    </recommendedName>
    <alternativeName>
        <fullName evidence="5">Very long-chain fatty acid condensing enzyme 4</fullName>
        <shortName evidence="5">VLCFA condensing enzyme 4</shortName>
    </alternativeName>
</protein>